<dbReference type="EMBL" id="CP000880">
    <property type="protein sequence ID" value="ABX20583.1"/>
    <property type="molecule type" value="Genomic_DNA"/>
</dbReference>
<dbReference type="SMR" id="A9MK24"/>
<dbReference type="STRING" id="41514.SARI_00660"/>
<dbReference type="KEGG" id="ses:SARI_00660"/>
<dbReference type="HOGENOM" id="CLU_175457_0_0_6"/>
<dbReference type="Proteomes" id="UP000002084">
    <property type="component" value="Chromosome"/>
</dbReference>
<dbReference type="Gene3D" id="1.10.3390.10">
    <property type="entry name" value="YejL-like"/>
    <property type="match status" value="1"/>
</dbReference>
<dbReference type="HAMAP" id="MF_00816">
    <property type="entry name" value="UPF0352"/>
    <property type="match status" value="1"/>
</dbReference>
<dbReference type="InterPro" id="IPR009857">
    <property type="entry name" value="UPF0352"/>
</dbReference>
<dbReference type="InterPro" id="IPR023202">
    <property type="entry name" value="YejL_sf"/>
</dbReference>
<dbReference type="NCBIfam" id="NF010242">
    <property type="entry name" value="PRK13689.1"/>
    <property type="match status" value="1"/>
</dbReference>
<dbReference type="Pfam" id="PF07208">
    <property type="entry name" value="DUF1414"/>
    <property type="match status" value="1"/>
</dbReference>
<dbReference type="PIRSF" id="PIRSF006188">
    <property type="entry name" value="UCP006188"/>
    <property type="match status" value="1"/>
</dbReference>
<dbReference type="SUPFAM" id="SSF158651">
    <property type="entry name" value="YejL-like"/>
    <property type="match status" value="1"/>
</dbReference>
<accession>A9MK24</accession>
<protein>
    <recommendedName>
        <fullName evidence="1">UPF0352 protein YejL</fullName>
    </recommendedName>
</protein>
<gene>
    <name evidence="1" type="primary">yejL</name>
    <name type="ordered locus">SARI_00660</name>
</gene>
<proteinExistence type="inferred from homology"/>
<reference key="1">
    <citation type="submission" date="2007-11" db="EMBL/GenBank/DDBJ databases">
        <authorList>
            <consortium name="The Salmonella enterica serovar Arizonae Genome Sequencing Project"/>
            <person name="McClelland M."/>
            <person name="Sanderson E.K."/>
            <person name="Porwollik S."/>
            <person name="Spieth J."/>
            <person name="Clifton W.S."/>
            <person name="Fulton R."/>
            <person name="Chunyan W."/>
            <person name="Wollam A."/>
            <person name="Shah N."/>
            <person name="Pepin K."/>
            <person name="Bhonagiri V."/>
            <person name="Nash W."/>
            <person name="Johnson M."/>
            <person name="Thiruvilangam P."/>
            <person name="Wilson R."/>
        </authorList>
    </citation>
    <scope>NUCLEOTIDE SEQUENCE [LARGE SCALE GENOMIC DNA]</scope>
    <source>
        <strain>ATCC BAA-731 / CDC346-86 / RSK2980</strain>
    </source>
</reference>
<sequence>MPQLSRYSDEHVEQLLSDLLSVLEKHKAPTDLSLMVLGNMVTNLINTSVAPAQRQAIANSFTRALQSSISEDKAH</sequence>
<keyword id="KW-1185">Reference proteome</keyword>
<organism>
    <name type="scientific">Salmonella arizonae (strain ATCC BAA-731 / CDC346-86 / RSK2980)</name>
    <dbReference type="NCBI Taxonomy" id="41514"/>
    <lineage>
        <taxon>Bacteria</taxon>
        <taxon>Pseudomonadati</taxon>
        <taxon>Pseudomonadota</taxon>
        <taxon>Gammaproteobacteria</taxon>
        <taxon>Enterobacterales</taxon>
        <taxon>Enterobacteriaceae</taxon>
        <taxon>Salmonella</taxon>
    </lineage>
</organism>
<feature type="chain" id="PRO_1000083819" description="UPF0352 protein YejL">
    <location>
        <begin position="1"/>
        <end position="75"/>
    </location>
</feature>
<evidence type="ECO:0000255" key="1">
    <source>
        <dbReference type="HAMAP-Rule" id="MF_00816"/>
    </source>
</evidence>
<name>YEJL_SALAR</name>
<comment type="similarity">
    <text evidence="1">Belongs to the UPF0352 family.</text>
</comment>